<feature type="chain" id="PRO_0000321179" description="Aspartate carbamoyltransferase catalytic subunit">
    <location>
        <begin position="1"/>
        <end position="323"/>
    </location>
</feature>
<feature type="binding site" evidence="1">
    <location>
        <position position="68"/>
    </location>
    <ligand>
        <name>carbamoyl phosphate</name>
        <dbReference type="ChEBI" id="CHEBI:58228"/>
    </ligand>
</feature>
<feature type="binding site" evidence="1">
    <location>
        <position position="69"/>
    </location>
    <ligand>
        <name>carbamoyl phosphate</name>
        <dbReference type="ChEBI" id="CHEBI:58228"/>
    </ligand>
</feature>
<feature type="binding site" evidence="1">
    <location>
        <position position="96"/>
    </location>
    <ligand>
        <name>L-aspartate</name>
        <dbReference type="ChEBI" id="CHEBI:29991"/>
    </ligand>
</feature>
<feature type="binding site" evidence="1">
    <location>
        <position position="118"/>
    </location>
    <ligand>
        <name>carbamoyl phosphate</name>
        <dbReference type="ChEBI" id="CHEBI:58228"/>
    </ligand>
</feature>
<feature type="binding site" evidence="1">
    <location>
        <position position="148"/>
    </location>
    <ligand>
        <name>carbamoyl phosphate</name>
        <dbReference type="ChEBI" id="CHEBI:58228"/>
    </ligand>
</feature>
<feature type="binding site" evidence="1">
    <location>
        <position position="151"/>
    </location>
    <ligand>
        <name>carbamoyl phosphate</name>
        <dbReference type="ChEBI" id="CHEBI:58228"/>
    </ligand>
</feature>
<feature type="binding site" evidence="1">
    <location>
        <position position="181"/>
    </location>
    <ligand>
        <name>L-aspartate</name>
        <dbReference type="ChEBI" id="CHEBI:29991"/>
    </ligand>
</feature>
<feature type="binding site" evidence="1">
    <location>
        <position position="236"/>
    </location>
    <ligand>
        <name>L-aspartate</name>
        <dbReference type="ChEBI" id="CHEBI:29991"/>
    </ligand>
</feature>
<feature type="binding site" evidence="1">
    <location>
        <position position="277"/>
    </location>
    <ligand>
        <name>carbamoyl phosphate</name>
        <dbReference type="ChEBI" id="CHEBI:58228"/>
    </ligand>
</feature>
<feature type="binding site" evidence="1">
    <location>
        <position position="278"/>
    </location>
    <ligand>
        <name>carbamoyl phosphate</name>
        <dbReference type="ChEBI" id="CHEBI:58228"/>
    </ligand>
</feature>
<keyword id="KW-0665">Pyrimidine biosynthesis</keyword>
<keyword id="KW-1185">Reference proteome</keyword>
<keyword id="KW-0808">Transferase</keyword>
<protein>
    <recommendedName>
        <fullName evidence="1">Aspartate carbamoyltransferase catalytic subunit</fullName>
        <ecNumber evidence="1">2.1.3.2</ecNumber>
    </recommendedName>
    <alternativeName>
        <fullName evidence="1">Aspartate transcarbamylase</fullName>
        <shortName evidence="1">ATCase</shortName>
    </alternativeName>
</protein>
<reference key="1">
    <citation type="submission" date="2006-12" db="EMBL/GenBank/DDBJ databases">
        <title>Complete sequence of chromosome 1 of Verminephrobacter eiseniae EF01-2.</title>
        <authorList>
            <person name="Copeland A."/>
            <person name="Lucas S."/>
            <person name="Lapidus A."/>
            <person name="Barry K."/>
            <person name="Detter J.C."/>
            <person name="Glavina del Rio T."/>
            <person name="Dalin E."/>
            <person name="Tice H."/>
            <person name="Pitluck S."/>
            <person name="Chertkov O."/>
            <person name="Brettin T."/>
            <person name="Bruce D."/>
            <person name="Han C."/>
            <person name="Tapia R."/>
            <person name="Gilna P."/>
            <person name="Schmutz J."/>
            <person name="Larimer F."/>
            <person name="Land M."/>
            <person name="Hauser L."/>
            <person name="Kyrpides N."/>
            <person name="Kim E."/>
            <person name="Stahl D."/>
            <person name="Richardson P."/>
        </authorList>
    </citation>
    <scope>NUCLEOTIDE SEQUENCE [LARGE SCALE GENOMIC DNA]</scope>
    <source>
        <strain>EF01-2</strain>
    </source>
</reference>
<proteinExistence type="inferred from homology"/>
<accession>A1WI17</accession>
<name>PYRB_VEREI</name>
<comment type="function">
    <text evidence="1">Catalyzes the condensation of carbamoyl phosphate and aspartate to form carbamoyl aspartate and inorganic phosphate, the committed step in the de novo pyrimidine nucleotide biosynthesis pathway.</text>
</comment>
<comment type="catalytic activity">
    <reaction evidence="1">
        <text>carbamoyl phosphate + L-aspartate = N-carbamoyl-L-aspartate + phosphate + H(+)</text>
        <dbReference type="Rhea" id="RHEA:20013"/>
        <dbReference type="ChEBI" id="CHEBI:15378"/>
        <dbReference type="ChEBI" id="CHEBI:29991"/>
        <dbReference type="ChEBI" id="CHEBI:32814"/>
        <dbReference type="ChEBI" id="CHEBI:43474"/>
        <dbReference type="ChEBI" id="CHEBI:58228"/>
        <dbReference type="EC" id="2.1.3.2"/>
    </reaction>
</comment>
<comment type="pathway">
    <text evidence="1">Pyrimidine metabolism; UMP biosynthesis via de novo pathway; (S)-dihydroorotate from bicarbonate: step 2/3.</text>
</comment>
<comment type="subunit">
    <text evidence="1">Heterododecamer (2C3:3R2) of six catalytic PyrB chains organized as two trimers (C3), and six regulatory PyrI chains organized as three dimers (R2).</text>
</comment>
<comment type="similarity">
    <text evidence="1">Belongs to the aspartate/ornithine carbamoyltransferase superfamily. ATCase family.</text>
</comment>
<gene>
    <name evidence="1" type="primary">pyrB</name>
    <name type="ordered locus">Veis_1514</name>
</gene>
<evidence type="ECO:0000255" key="1">
    <source>
        <dbReference type="HAMAP-Rule" id="MF_00001"/>
    </source>
</evidence>
<organism>
    <name type="scientific">Verminephrobacter eiseniae (strain EF01-2)</name>
    <dbReference type="NCBI Taxonomy" id="391735"/>
    <lineage>
        <taxon>Bacteria</taxon>
        <taxon>Pseudomonadati</taxon>
        <taxon>Pseudomonadota</taxon>
        <taxon>Betaproteobacteria</taxon>
        <taxon>Burkholderiales</taxon>
        <taxon>Comamonadaceae</taxon>
        <taxon>Verminephrobacter</taxon>
    </lineage>
</organism>
<dbReference type="EC" id="2.1.3.2" evidence="1"/>
<dbReference type="EMBL" id="CP000542">
    <property type="protein sequence ID" value="ABM57274.1"/>
    <property type="molecule type" value="Genomic_DNA"/>
</dbReference>
<dbReference type="RefSeq" id="WP_011809281.1">
    <property type="nucleotide sequence ID" value="NC_008786.1"/>
</dbReference>
<dbReference type="SMR" id="A1WI17"/>
<dbReference type="STRING" id="391735.Veis_1514"/>
<dbReference type="GeneID" id="76460135"/>
<dbReference type="KEGG" id="vei:Veis_1514"/>
<dbReference type="eggNOG" id="COG0540">
    <property type="taxonomic scope" value="Bacteria"/>
</dbReference>
<dbReference type="HOGENOM" id="CLU_043846_2_0_4"/>
<dbReference type="OrthoDB" id="9774690at2"/>
<dbReference type="UniPathway" id="UPA00070">
    <property type="reaction ID" value="UER00116"/>
</dbReference>
<dbReference type="Proteomes" id="UP000000374">
    <property type="component" value="Chromosome"/>
</dbReference>
<dbReference type="GO" id="GO:0005829">
    <property type="term" value="C:cytosol"/>
    <property type="evidence" value="ECO:0007669"/>
    <property type="project" value="TreeGrafter"/>
</dbReference>
<dbReference type="GO" id="GO:0016597">
    <property type="term" value="F:amino acid binding"/>
    <property type="evidence" value="ECO:0007669"/>
    <property type="project" value="InterPro"/>
</dbReference>
<dbReference type="GO" id="GO:0004070">
    <property type="term" value="F:aspartate carbamoyltransferase activity"/>
    <property type="evidence" value="ECO:0007669"/>
    <property type="project" value="UniProtKB-UniRule"/>
</dbReference>
<dbReference type="GO" id="GO:0006207">
    <property type="term" value="P:'de novo' pyrimidine nucleobase biosynthetic process"/>
    <property type="evidence" value="ECO:0007669"/>
    <property type="project" value="InterPro"/>
</dbReference>
<dbReference type="GO" id="GO:0044205">
    <property type="term" value="P:'de novo' UMP biosynthetic process"/>
    <property type="evidence" value="ECO:0007669"/>
    <property type="project" value="UniProtKB-UniRule"/>
</dbReference>
<dbReference type="GO" id="GO:0006520">
    <property type="term" value="P:amino acid metabolic process"/>
    <property type="evidence" value="ECO:0007669"/>
    <property type="project" value="InterPro"/>
</dbReference>
<dbReference type="FunFam" id="3.40.50.1370:FF:000007">
    <property type="entry name" value="Aspartate carbamoyltransferase"/>
    <property type="match status" value="1"/>
</dbReference>
<dbReference type="Gene3D" id="3.40.50.1370">
    <property type="entry name" value="Aspartate/ornithine carbamoyltransferase"/>
    <property type="match status" value="2"/>
</dbReference>
<dbReference type="HAMAP" id="MF_00001">
    <property type="entry name" value="Asp_carb_tr"/>
    <property type="match status" value="1"/>
</dbReference>
<dbReference type="InterPro" id="IPR006132">
    <property type="entry name" value="Asp/Orn_carbamoyltranf_P-bd"/>
</dbReference>
<dbReference type="InterPro" id="IPR006130">
    <property type="entry name" value="Asp/Orn_carbamoylTrfase"/>
</dbReference>
<dbReference type="InterPro" id="IPR036901">
    <property type="entry name" value="Asp/Orn_carbamoylTrfase_sf"/>
</dbReference>
<dbReference type="InterPro" id="IPR002082">
    <property type="entry name" value="Asp_carbamoyltransf"/>
</dbReference>
<dbReference type="InterPro" id="IPR006131">
    <property type="entry name" value="Asp_carbamoyltransf_Asp/Orn-bd"/>
</dbReference>
<dbReference type="NCBIfam" id="TIGR00670">
    <property type="entry name" value="asp_carb_tr"/>
    <property type="match status" value="1"/>
</dbReference>
<dbReference type="NCBIfam" id="NF002032">
    <property type="entry name" value="PRK00856.1"/>
    <property type="match status" value="1"/>
</dbReference>
<dbReference type="PANTHER" id="PTHR45753:SF6">
    <property type="entry name" value="ASPARTATE CARBAMOYLTRANSFERASE"/>
    <property type="match status" value="1"/>
</dbReference>
<dbReference type="PANTHER" id="PTHR45753">
    <property type="entry name" value="ORNITHINE CARBAMOYLTRANSFERASE, MITOCHONDRIAL"/>
    <property type="match status" value="1"/>
</dbReference>
<dbReference type="Pfam" id="PF00185">
    <property type="entry name" value="OTCace"/>
    <property type="match status" value="1"/>
</dbReference>
<dbReference type="Pfam" id="PF02729">
    <property type="entry name" value="OTCace_N"/>
    <property type="match status" value="1"/>
</dbReference>
<dbReference type="PRINTS" id="PR00100">
    <property type="entry name" value="AOTCASE"/>
</dbReference>
<dbReference type="PRINTS" id="PR00101">
    <property type="entry name" value="ATCASE"/>
</dbReference>
<dbReference type="SUPFAM" id="SSF53671">
    <property type="entry name" value="Aspartate/ornithine carbamoyltransferase"/>
    <property type="match status" value="1"/>
</dbReference>
<dbReference type="PROSITE" id="PS00097">
    <property type="entry name" value="CARBAMOYLTRANSFERASE"/>
    <property type="match status" value="1"/>
</dbReference>
<sequence>MQHQRNPQLNGQGELIHLLSIEGLPRDIVTHILDTAANFVSVNDREVKKVPLLRGKSVFNLFFENSTRTRTTFEIAAKRLSADVFNLDITRSSASKGESLLDTIANLSAMAADLFVVRHSESGAPYLIARHVAPHVHVINAGDGRHAHPTQGLLDLYTIRHYKKDFSQLTVAIVGDMLHSRVARSDIHGLITLGCAEVRAVGPRTLVPADMAQMGVRVCHQLQEGIEGADVIIMLRLQNERMSGALLSSSQEYFKSFGLTPEKLQLAKPDAIVMHPGPINRGVEIDSAVVDGRQSVILPQVGFGIAVRMAVMSIVAGNEACGH</sequence>